<dbReference type="EMBL" id="CM000126">
    <property type="protein sequence ID" value="EAY76896.1"/>
    <property type="molecule type" value="Genomic_DNA"/>
</dbReference>
<dbReference type="SMR" id="A2WY50"/>
<dbReference type="EnsemblPlants" id="BGIOSGA000291-TA">
    <property type="protein sequence ID" value="BGIOSGA000291-PA"/>
    <property type="gene ID" value="BGIOSGA000291"/>
</dbReference>
<dbReference type="EnsemblPlants" id="OsGoSa_01g0043370.01">
    <property type="protein sequence ID" value="OsGoSa_01g0043370.01"/>
    <property type="gene ID" value="OsGoSa_01g0043370"/>
</dbReference>
<dbReference type="EnsemblPlants" id="OsIR64_01g0042800.01">
    <property type="protein sequence ID" value="OsIR64_01g0042800.01"/>
    <property type="gene ID" value="OsIR64_01g0042800"/>
</dbReference>
<dbReference type="EnsemblPlants" id="OsKYG_01g0043090.01">
    <property type="protein sequence ID" value="OsKYG_01g0043090.01"/>
    <property type="gene ID" value="OsKYG_01g0043090"/>
</dbReference>
<dbReference type="EnsemblPlants" id="OsLaMu_01g0043140.01">
    <property type="protein sequence ID" value="OsLaMu_01g0043140.01"/>
    <property type="gene ID" value="OsLaMu_01g0043140"/>
</dbReference>
<dbReference type="EnsemblPlants" id="OsLima_01g0043130.01">
    <property type="protein sequence ID" value="OsLima_01g0043130.01"/>
    <property type="gene ID" value="OsLima_01g0043130"/>
</dbReference>
<dbReference type="EnsemblPlants" id="OsPr106_01g0043160.01">
    <property type="protein sequence ID" value="OsPr106_01g0043160.01"/>
    <property type="gene ID" value="OsPr106_01g0043160"/>
</dbReference>
<dbReference type="EnsemblPlants" id="OsZS97_01G043380_01">
    <property type="protein sequence ID" value="OsZS97_01G043380_01"/>
    <property type="gene ID" value="OsZS97_01G043380"/>
</dbReference>
<dbReference type="Gramene" id="BGIOSGA000291-TA">
    <property type="protein sequence ID" value="BGIOSGA000291-PA"/>
    <property type="gene ID" value="BGIOSGA000291"/>
</dbReference>
<dbReference type="Gramene" id="OsGoSa_01g0043370.01">
    <property type="protein sequence ID" value="OsGoSa_01g0043370.01"/>
    <property type="gene ID" value="OsGoSa_01g0043370"/>
</dbReference>
<dbReference type="Gramene" id="OsIR64_01g0042800.01">
    <property type="protein sequence ID" value="OsIR64_01g0042800.01"/>
    <property type="gene ID" value="OsIR64_01g0042800"/>
</dbReference>
<dbReference type="Gramene" id="OsKYG_01g0043090.01">
    <property type="protein sequence ID" value="OsKYG_01g0043090.01"/>
    <property type="gene ID" value="OsKYG_01g0043090"/>
</dbReference>
<dbReference type="Gramene" id="OsLaMu_01g0043140.01">
    <property type="protein sequence ID" value="OsLaMu_01g0043140.01"/>
    <property type="gene ID" value="OsLaMu_01g0043140"/>
</dbReference>
<dbReference type="Gramene" id="OsLima_01g0043130.01">
    <property type="protein sequence ID" value="OsLima_01g0043130.01"/>
    <property type="gene ID" value="OsLima_01g0043130"/>
</dbReference>
<dbReference type="Gramene" id="OsPr106_01g0043160.01">
    <property type="protein sequence ID" value="OsPr106_01g0043160.01"/>
    <property type="gene ID" value="OsPr106_01g0043160"/>
</dbReference>
<dbReference type="Gramene" id="OsZS97_01G043380_01">
    <property type="protein sequence ID" value="OsZS97_01G043380_01"/>
    <property type="gene ID" value="OsZS97_01G043380"/>
</dbReference>
<dbReference type="HOGENOM" id="CLU_034694_0_0_1"/>
<dbReference type="OMA" id="GPGRFIW"/>
<dbReference type="OrthoDB" id="10251508at2759"/>
<dbReference type="Proteomes" id="UP000007015">
    <property type="component" value="Chromosome 1"/>
</dbReference>
<dbReference type="GO" id="GO:0016020">
    <property type="term" value="C:membrane"/>
    <property type="evidence" value="ECO:0007669"/>
    <property type="project" value="UniProtKB-SubCell"/>
</dbReference>
<dbReference type="GO" id="GO:0015095">
    <property type="term" value="F:magnesium ion transmembrane transporter activity"/>
    <property type="evidence" value="ECO:0007669"/>
    <property type="project" value="UniProtKB-ARBA"/>
</dbReference>
<dbReference type="CDD" id="cd12823">
    <property type="entry name" value="Mrs2_Mfm1p-like"/>
    <property type="match status" value="1"/>
</dbReference>
<dbReference type="FunFam" id="2.40.128.330:FF:000001">
    <property type="entry name" value="Magnesium transporter MRS2-1"/>
    <property type="match status" value="1"/>
</dbReference>
<dbReference type="FunFam" id="1.20.58.340:FF:000022">
    <property type="entry name" value="Magnesium transporter MRS2-F"/>
    <property type="match status" value="1"/>
</dbReference>
<dbReference type="Gene3D" id="2.40.128.330">
    <property type="match status" value="1"/>
</dbReference>
<dbReference type="Gene3D" id="1.20.58.340">
    <property type="entry name" value="Magnesium transport protein CorA, transmembrane region"/>
    <property type="match status" value="1"/>
</dbReference>
<dbReference type="InterPro" id="IPR039204">
    <property type="entry name" value="MRS2-like"/>
</dbReference>
<dbReference type="PANTHER" id="PTHR13890:SF29">
    <property type="entry name" value="MAGNESIUM TRANSPORTER MRS2-F"/>
    <property type="match status" value="1"/>
</dbReference>
<dbReference type="PANTHER" id="PTHR13890">
    <property type="entry name" value="RNA SPLICING PROTEIN MRS2, MITOCHONDRIAL"/>
    <property type="match status" value="1"/>
</dbReference>
<dbReference type="Pfam" id="PF22099">
    <property type="entry name" value="MRS2-like"/>
    <property type="match status" value="3"/>
</dbReference>
<gene>
    <name type="primary">MRS2-F</name>
    <name type="ORF">OsI_04855</name>
</gene>
<comment type="function">
    <text evidence="1">Magnesium transporter that may mediate the influx of magnesium.</text>
</comment>
<comment type="subcellular location">
    <subcellularLocation>
        <location evidence="1">Membrane</location>
        <topology evidence="1">Multi-pass membrane protein</topology>
    </subcellularLocation>
</comment>
<comment type="similarity">
    <text evidence="4">Belongs to the CorA metal ion transporter (MIT) (TC 1.A.35.5) family.</text>
</comment>
<sequence length="444" mass="48356">MRPSAAAGGGGGGGGRRKAAAAAAAASREWLVVPASGQARVEEAGKHAVMARTGLPARDLRVLDPLLSYPSTILGRERAIVVNLERVKAVITAAEVLLPNSKDPAFASFVCDLQARVLASSSDQAAEFTDMEGESSAVTSPFPALTSTTPNELEMTNKNSNVVGGMTHSNSMPTLTAAKDGNTKVLPFEFRALEVCLESACRSLEEETSTLEQEAYPALDELTSKISTLNLERVRQIKSRLVAISGRVQKVRDELEHLLDDEMDMAEMYLTEKLTRQEISETSSRVEVDDPSQLEVDRDEDYRSEADVSNGTFIGYKPHIEELEMLLEAYFVQIDGTLNKLSHLREYVDDTEDYINIMLDDKQNQLLQMGVMLSTATVVITAGVAVVGLFGMNIGISLYADPTNEEEKRASNMKFWETTLGTIAGCTVMYIVAMGWGKRSGLLQ</sequence>
<proteinExistence type="inferred from homology"/>
<reference key="1">
    <citation type="journal article" date="2005" name="PLoS Biol.">
        <title>The genomes of Oryza sativa: a history of duplications.</title>
        <authorList>
            <person name="Yu J."/>
            <person name="Wang J."/>
            <person name="Lin W."/>
            <person name="Li S."/>
            <person name="Li H."/>
            <person name="Zhou J."/>
            <person name="Ni P."/>
            <person name="Dong W."/>
            <person name="Hu S."/>
            <person name="Zeng C."/>
            <person name="Zhang J."/>
            <person name="Zhang Y."/>
            <person name="Li R."/>
            <person name="Xu Z."/>
            <person name="Li S."/>
            <person name="Li X."/>
            <person name="Zheng H."/>
            <person name="Cong L."/>
            <person name="Lin L."/>
            <person name="Yin J."/>
            <person name="Geng J."/>
            <person name="Li G."/>
            <person name="Shi J."/>
            <person name="Liu J."/>
            <person name="Lv H."/>
            <person name="Li J."/>
            <person name="Wang J."/>
            <person name="Deng Y."/>
            <person name="Ran L."/>
            <person name="Shi X."/>
            <person name="Wang X."/>
            <person name="Wu Q."/>
            <person name="Li C."/>
            <person name="Ren X."/>
            <person name="Wang J."/>
            <person name="Wang X."/>
            <person name="Li D."/>
            <person name="Liu D."/>
            <person name="Zhang X."/>
            <person name="Ji Z."/>
            <person name="Zhao W."/>
            <person name="Sun Y."/>
            <person name="Zhang Z."/>
            <person name="Bao J."/>
            <person name="Han Y."/>
            <person name="Dong L."/>
            <person name="Ji J."/>
            <person name="Chen P."/>
            <person name="Wu S."/>
            <person name="Liu J."/>
            <person name="Xiao Y."/>
            <person name="Bu D."/>
            <person name="Tan J."/>
            <person name="Yang L."/>
            <person name="Ye C."/>
            <person name="Zhang J."/>
            <person name="Xu J."/>
            <person name="Zhou Y."/>
            <person name="Yu Y."/>
            <person name="Zhang B."/>
            <person name="Zhuang S."/>
            <person name="Wei H."/>
            <person name="Liu B."/>
            <person name="Lei M."/>
            <person name="Yu H."/>
            <person name="Li Y."/>
            <person name="Xu H."/>
            <person name="Wei S."/>
            <person name="He X."/>
            <person name="Fang L."/>
            <person name="Zhang Z."/>
            <person name="Zhang Y."/>
            <person name="Huang X."/>
            <person name="Su Z."/>
            <person name="Tong W."/>
            <person name="Li J."/>
            <person name="Tong Z."/>
            <person name="Li S."/>
            <person name="Ye J."/>
            <person name="Wang L."/>
            <person name="Fang L."/>
            <person name="Lei T."/>
            <person name="Chen C.-S."/>
            <person name="Chen H.-C."/>
            <person name="Xu Z."/>
            <person name="Li H."/>
            <person name="Huang H."/>
            <person name="Zhang F."/>
            <person name="Xu H."/>
            <person name="Li N."/>
            <person name="Zhao C."/>
            <person name="Li S."/>
            <person name="Dong L."/>
            <person name="Huang Y."/>
            <person name="Li L."/>
            <person name="Xi Y."/>
            <person name="Qi Q."/>
            <person name="Li W."/>
            <person name="Zhang B."/>
            <person name="Hu W."/>
            <person name="Zhang Y."/>
            <person name="Tian X."/>
            <person name="Jiao Y."/>
            <person name="Liang X."/>
            <person name="Jin J."/>
            <person name="Gao L."/>
            <person name="Zheng W."/>
            <person name="Hao B."/>
            <person name="Liu S.-M."/>
            <person name="Wang W."/>
            <person name="Yuan L."/>
            <person name="Cao M."/>
            <person name="McDermott J."/>
            <person name="Samudrala R."/>
            <person name="Wang J."/>
            <person name="Wong G.K.-S."/>
            <person name="Yang H."/>
        </authorList>
    </citation>
    <scope>NUCLEOTIDE SEQUENCE [LARGE SCALE GENOMIC DNA]</scope>
    <source>
        <strain>cv. 93-11</strain>
    </source>
</reference>
<evidence type="ECO:0000250" key="1"/>
<evidence type="ECO:0000255" key="2"/>
<evidence type="ECO:0000256" key="3">
    <source>
        <dbReference type="SAM" id="MobiDB-lite"/>
    </source>
</evidence>
<evidence type="ECO:0000305" key="4"/>
<protein>
    <recommendedName>
        <fullName>Magnesium transporter MRS2-F</fullName>
    </recommendedName>
</protein>
<keyword id="KW-0175">Coiled coil</keyword>
<keyword id="KW-0406">Ion transport</keyword>
<keyword id="KW-0460">Magnesium</keyword>
<keyword id="KW-0472">Membrane</keyword>
<keyword id="KW-1185">Reference proteome</keyword>
<keyword id="KW-0812">Transmembrane</keyword>
<keyword id="KW-1133">Transmembrane helix</keyword>
<keyword id="KW-0813">Transport</keyword>
<organism>
    <name type="scientific">Oryza sativa subsp. indica</name>
    <name type="common">Rice</name>
    <dbReference type="NCBI Taxonomy" id="39946"/>
    <lineage>
        <taxon>Eukaryota</taxon>
        <taxon>Viridiplantae</taxon>
        <taxon>Streptophyta</taxon>
        <taxon>Embryophyta</taxon>
        <taxon>Tracheophyta</taxon>
        <taxon>Spermatophyta</taxon>
        <taxon>Magnoliopsida</taxon>
        <taxon>Liliopsida</taxon>
        <taxon>Poales</taxon>
        <taxon>Poaceae</taxon>
        <taxon>BOP clade</taxon>
        <taxon>Oryzoideae</taxon>
        <taxon>Oryzeae</taxon>
        <taxon>Oryzinae</taxon>
        <taxon>Oryza</taxon>
        <taxon>Oryza sativa</taxon>
    </lineage>
</organism>
<feature type="chain" id="PRO_0000394276" description="Magnesium transporter MRS2-F">
    <location>
        <begin position="1"/>
        <end position="444"/>
    </location>
</feature>
<feature type="transmembrane region" description="Helical" evidence="2">
    <location>
        <begin position="370"/>
        <end position="390"/>
    </location>
</feature>
<feature type="transmembrane region" description="Helical" evidence="2">
    <location>
        <begin position="415"/>
        <end position="435"/>
    </location>
</feature>
<feature type="region of interest" description="Disordered" evidence="3">
    <location>
        <begin position="128"/>
        <end position="155"/>
    </location>
</feature>
<feature type="coiled-coil region" evidence="2">
    <location>
        <begin position="195"/>
        <end position="258"/>
    </location>
</feature>
<feature type="short sequence motif" description="Required for magnesium transport activity">
    <location>
        <begin position="391"/>
        <end position="393"/>
    </location>
</feature>
<feature type="compositionally biased region" description="Polar residues" evidence="3">
    <location>
        <begin position="145"/>
        <end position="155"/>
    </location>
</feature>
<name>MRS2F_ORYSI</name>
<accession>A2WY50</accession>